<keyword id="KW-0963">Cytoplasm</keyword>
<keyword id="KW-1185">Reference proteome</keyword>
<keyword id="KW-0690">Ribosome biogenesis</keyword>
<comment type="function">
    <text evidence="1">One of several proteins that assist in the late maturation steps of the functional core of the 30S ribosomal subunit. Associates with free 30S ribosomal subunits (but not with 30S subunits that are part of 70S ribosomes or polysomes). Required for efficient processing of 16S rRNA. May interact with the 5'-terminal helix region of 16S rRNA.</text>
</comment>
<comment type="subunit">
    <text evidence="1">Monomer. Binds 30S ribosomal subunits, but not 50S ribosomal subunits or 70S ribosomes.</text>
</comment>
<comment type="subcellular location">
    <subcellularLocation>
        <location evidence="1">Cytoplasm</location>
    </subcellularLocation>
</comment>
<comment type="similarity">
    <text evidence="1">Belongs to the RbfA family.</text>
</comment>
<gene>
    <name evidence="1" type="primary">rbfA</name>
    <name type="ordered locus">SYNAS_26740</name>
    <name type="ORF">SYN_01785</name>
</gene>
<protein>
    <recommendedName>
        <fullName evidence="1">Ribosome-binding factor A</fullName>
    </recommendedName>
</protein>
<dbReference type="EMBL" id="CP000252">
    <property type="protein sequence ID" value="ABC78553.1"/>
    <property type="molecule type" value="Genomic_DNA"/>
</dbReference>
<dbReference type="RefSeq" id="WP_011418572.1">
    <property type="nucleotide sequence ID" value="NC_007759.1"/>
</dbReference>
<dbReference type="SMR" id="Q2LWT9"/>
<dbReference type="FunCoup" id="Q2LWT9">
    <property type="interactions" value="425"/>
</dbReference>
<dbReference type="STRING" id="56780.SYN_01785"/>
<dbReference type="KEGG" id="sat:SYN_01785"/>
<dbReference type="eggNOG" id="COG0858">
    <property type="taxonomic scope" value="Bacteria"/>
</dbReference>
<dbReference type="HOGENOM" id="CLU_089475_6_3_7"/>
<dbReference type="InParanoid" id="Q2LWT9"/>
<dbReference type="OrthoDB" id="307788at2"/>
<dbReference type="Proteomes" id="UP000001933">
    <property type="component" value="Chromosome"/>
</dbReference>
<dbReference type="GO" id="GO:0005829">
    <property type="term" value="C:cytosol"/>
    <property type="evidence" value="ECO:0007669"/>
    <property type="project" value="TreeGrafter"/>
</dbReference>
<dbReference type="GO" id="GO:0043024">
    <property type="term" value="F:ribosomal small subunit binding"/>
    <property type="evidence" value="ECO:0007669"/>
    <property type="project" value="TreeGrafter"/>
</dbReference>
<dbReference type="GO" id="GO:0030490">
    <property type="term" value="P:maturation of SSU-rRNA"/>
    <property type="evidence" value="ECO:0007669"/>
    <property type="project" value="UniProtKB-UniRule"/>
</dbReference>
<dbReference type="Gene3D" id="3.30.300.20">
    <property type="match status" value="1"/>
</dbReference>
<dbReference type="HAMAP" id="MF_00003">
    <property type="entry name" value="RbfA"/>
    <property type="match status" value="1"/>
</dbReference>
<dbReference type="InterPro" id="IPR015946">
    <property type="entry name" value="KH_dom-like_a/b"/>
</dbReference>
<dbReference type="InterPro" id="IPR000238">
    <property type="entry name" value="RbfA"/>
</dbReference>
<dbReference type="InterPro" id="IPR023799">
    <property type="entry name" value="RbfA_dom_sf"/>
</dbReference>
<dbReference type="InterPro" id="IPR020053">
    <property type="entry name" value="Ribosome-bd_factorA_CS"/>
</dbReference>
<dbReference type="NCBIfam" id="TIGR00082">
    <property type="entry name" value="rbfA"/>
    <property type="match status" value="1"/>
</dbReference>
<dbReference type="PANTHER" id="PTHR33515">
    <property type="entry name" value="RIBOSOME-BINDING FACTOR A, CHLOROPLASTIC-RELATED"/>
    <property type="match status" value="1"/>
</dbReference>
<dbReference type="PANTHER" id="PTHR33515:SF1">
    <property type="entry name" value="RIBOSOME-BINDING FACTOR A, CHLOROPLASTIC-RELATED"/>
    <property type="match status" value="1"/>
</dbReference>
<dbReference type="Pfam" id="PF02033">
    <property type="entry name" value="RBFA"/>
    <property type="match status" value="1"/>
</dbReference>
<dbReference type="SUPFAM" id="SSF89919">
    <property type="entry name" value="Ribosome-binding factor A, RbfA"/>
    <property type="match status" value="1"/>
</dbReference>
<dbReference type="PROSITE" id="PS01319">
    <property type="entry name" value="RBFA"/>
    <property type="match status" value="1"/>
</dbReference>
<evidence type="ECO:0000255" key="1">
    <source>
        <dbReference type="HAMAP-Rule" id="MF_00003"/>
    </source>
</evidence>
<accession>Q2LWT9</accession>
<organism>
    <name type="scientific">Syntrophus aciditrophicus (strain SB)</name>
    <dbReference type="NCBI Taxonomy" id="56780"/>
    <lineage>
        <taxon>Bacteria</taxon>
        <taxon>Pseudomonadati</taxon>
        <taxon>Thermodesulfobacteriota</taxon>
        <taxon>Syntrophia</taxon>
        <taxon>Syntrophales</taxon>
        <taxon>Syntrophaceae</taxon>
        <taxon>Syntrophus</taxon>
    </lineage>
</organism>
<feature type="chain" id="PRO_1000000230" description="Ribosome-binding factor A">
    <location>
        <begin position="1"/>
        <end position="123"/>
    </location>
</feature>
<proteinExistence type="inferred from homology"/>
<reference key="1">
    <citation type="journal article" date="2007" name="Proc. Natl. Acad. Sci. U.S.A.">
        <title>The genome of Syntrophus aciditrophicus: life at the thermodynamic limit of microbial growth.</title>
        <authorList>
            <person name="McInerney M.J."/>
            <person name="Rohlin L."/>
            <person name="Mouttaki H."/>
            <person name="Kim U."/>
            <person name="Krupp R.S."/>
            <person name="Rios-Hernandez L."/>
            <person name="Sieber J."/>
            <person name="Struchtemeyer C.G."/>
            <person name="Bhattacharyya A."/>
            <person name="Campbell J.W."/>
            <person name="Gunsalus R.P."/>
        </authorList>
    </citation>
    <scope>NUCLEOTIDE SEQUENCE [LARGE SCALE GENOMIC DNA]</scope>
    <source>
        <strain>SB</strain>
    </source>
</reference>
<name>RBFA_SYNAS</name>
<sequence length="123" mass="14152">MTQFKRADRVADLVKMEIADILLRRIRDPRVSRLTVTGVKVSDDLRTARIFFVEMGEDSCHPETLEGLQKAGGFIRKELGKRLKLRYVPDLIFKPDSSFAYGSRIDQLINEIHREEENDGSDT</sequence>